<name>SBMC_CITRI</name>
<reference key="1">
    <citation type="journal article" date="2010" name="J. Bacteriol.">
        <title>The Citrobacter rodentium genome sequence reveals convergent evolution with human pathogenic Escherichia coli.</title>
        <authorList>
            <person name="Petty N.K."/>
            <person name="Bulgin R."/>
            <person name="Crepin V.F."/>
            <person name="Cerdeno-Tarraga A.M."/>
            <person name="Schroeder G.N."/>
            <person name="Quail M.A."/>
            <person name="Lennard N."/>
            <person name="Corton C."/>
            <person name="Barron A."/>
            <person name="Clark L."/>
            <person name="Toribio A.L."/>
            <person name="Parkhill J."/>
            <person name="Dougan G."/>
            <person name="Frankel G."/>
            <person name="Thomson N.R."/>
        </authorList>
    </citation>
    <scope>NUCLEOTIDE SEQUENCE [LARGE SCALE GENOMIC DNA]</scope>
    <source>
        <strain>ICC168</strain>
    </source>
</reference>
<accession>D2TPS8</accession>
<gene>
    <name evidence="1" type="primary">sbmC</name>
    <name type="ordered locus">ROD_21481</name>
</gene>
<feature type="chain" id="PRO_0000409691" description="DNA gyrase inhibitor">
    <location>
        <begin position="1"/>
        <end position="157"/>
    </location>
</feature>
<sequence length="157" mass="17912">MNYEIRQVDKRTVAGFHLVGPWEQTVKQGFEQLMKWVEGRQIVTDEWIAVYFDNPDVVPAEKLRCSTVVSVPADFVVPANSEGVSLSEIDGGQYATAVARVTDNDFSTPWYQFFNSLAQDNKYEMACKPCFEVYLNDGCTEGYWDIEMYIAVQPLSR</sequence>
<protein>
    <recommendedName>
        <fullName evidence="1">DNA gyrase inhibitor</fullName>
    </recommendedName>
</protein>
<evidence type="ECO:0000255" key="1">
    <source>
        <dbReference type="HAMAP-Rule" id="MF_01896"/>
    </source>
</evidence>
<keyword id="KW-0963">Cytoplasm</keyword>
<keyword id="KW-1185">Reference proteome</keyword>
<keyword id="KW-0346">Stress response</keyword>
<comment type="function">
    <text evidence="1">Inhibits the supercoiling activity of DNA gyrase. Acts by inhibiting DNA gyrase at an early step, prior to (or at the step of) binding of DNA by the gyrase. It protects cells against toxins that target DNA gyrase, by inhibiting activity of these toxins and reducing the formation of lethal double-strand breaks in the cell.</text>
</comment>
<comment type="subunit">
    <text evidence="1">Interacts with DNA gyrase.</text>
</comment>
<comment type="subcellular location">
    <subcellularLocation>
        <location evidence="1">Cytoplasm</location>
    </subcellularLocation>
</comment>
<comment type="similarity">
    <text evidence="1">Belongs to the DNA gyrase inhibitor family.</text>
</comment>
<proteinExistence type="inferred from homology"/>
<dbReference type="EMBL" id="FN543502">
    <property type="protein sequence ID" value="CBG88896.1"/>
    <property type="molecule type" value="Genomic_DNA"/>
</dbReference>
<dbReference type="RefSeq" id="WP_012906351.1">
    <property type="nucleotide sequence ID" value="NC_013716.1"/>
</dbReference>
<dbReference type="SMR" id="D2TPS8"/>
<dbReference type="STRING" id="637910.ROD_21481"/>
<dbReference type="KEGG" id="cro:ROD_21481"/>
<dbReference type="eggNOG" id="COG3449">
    <property type="taxonomic scope" value="Bacteria"/>
</dbReference>
<dbReference type="HOGENOM" id="CLU_113664_3_2_6"/>
<dbReference type="OrthoDB" id="282744at2"/>
<dbReference type="Proteomes" id="UP000001889">
    <property type="component" value="Chromosome"/>
</dbReference>
<dbReference type="GO" id="GO:0005737">
    <property type="term" value="C:cytoplasm"/>
    <property type="evidence" value="ECO:0007669"/>
    <property type="project" value="UniProtKB-SubCell"/>
</dbReference>
<dbReference type="GO" id="GO:0008657">
    <property type="term" value="F:DNA topoisomerase type II (double strand cut, ATP-hydrolyzing) inhibitor activity"/>
    <property type="evidence" value="ECO:0007669"/>
    <property type="project" value="UniProtKB-UniRule"/>
</dbReference>
<dbReference type="Gene3D" id="3.20.80.10">
    <property type="entry name" value="Regulatory factor, effector binding domain"/>
    <property type="match status" value="1"/>
</dbReference>
<dbReference type="HAMAP" id="MF_01896">
    <property type="entry name" value="DNA_gyrase_inhibitor"/>
    <property type="match status" value="1"/>
</dbReference>
<dbReference type="InterPro" id="IPR010499">
    <property type="entry name" value="AraC_E-bd"/>
</dbReference>
<dbReference type="InterPro" id="IPR050908">
    <property type="entry name" value="DNA_gyrase_inhibitor"/>
</dbReference>
<dbReference type="InterPro" id="IPR024911">
    <property type="entry name" value="DNA_gyrase_inhibitor_GyrI"/>
</dbReference>
<dbReference type="InterPro" id="IPR029442">
    <property type="entry name" value="GyrI-like"/>
</dbReference>
<dbReference type="InterPro" id="IPR011256">
    <property type="entry name" value="Reg_factor_effector_dom_sf"/>
</dbReference>
<dbReference type="NCBIfam" id="NF007451">
    <property type="entry name" value="PRK10016.1"/>
    <property type="match status" value="1"/>
</dbReference>
<dbReference type="PANTHER" id="PTHR40055:SF2">
    <property type="entry name" value="DNA GYRASE INHIBITOR"/>
    <property type="match status" value="1"/>
</dbReference>
<dbReference type="PANTHER" id="PTHR40055">
    <property type="entry name" value="TRANSCRIPTIONAL REGULATOR YGIV-RELATED"/>
    <property type="match status" value="1"/>
</dbReference>
<dbReference type="Pfam" id="PF06445">
    <property type="entry name" value="GyrI-like"/>
    <property type="match status" value="1"/>
</dbReference>
<dbReference type="SMART" id="SM00871">
    <property type="entry name" value="AraC_E_bind"/>
    <property type="match status" value="1"/>
</dbReference>
<dbReference type="SUPFAM" id="SSF55136">
    <property type="entry name" value="Probable bacterial effector-binding domain"/>
    <property type="match status" value="1"/>
</dbReference>
<organism>
    <name type="scientific">Citrobacter rodentium (strain ICC168)</name>
    <name type="common">Citrobacter freundii biotype 4280</name>
    <dbReference type="NCBI Taxonomy" id="637910"/>
    <lineage>
        <taxon>Bacteria</taxon>
        <taxon>Pseudomonadati</taxon>
        <taxon>Pseudomonadota</taxon>
        <taxon>Gammaproteobacteria</taxon>
        <taxon>Enterobacterales</taxon>
        <taxon>Enterobacteriaceae</taxon>
        <taxon>Citrobacter</taxon>
    </lineage>
</organism>